<sequence>MELYSLTIHELRELLKKREVSALEVTKSYLERIKEVEPKIDALITITEDFALQRAKEADEKIKNGEDTALTGIPVIIKDNISTEGIKTTCSSKMLENYIPPYNATVVEKLLEEGVIILGKSNLDEFAMGSSTENSAFKTTKNPWDLSRVPGGSSGGSAAAIAADEAAFALGSDTGGSIRQPASLCGVVGMKPTYGLVSRYGLVAFASSLDQIGPFTKDVTDCAIVLNTIIGHDPKDSTSLKIDKPDYTSYLKEDIKGLRIGVAKEFFGEGIEEGVKETVQESIKVLQDLGAEIIDISIPYVEYALPAYYIIASAEASSNLARYDGIRYGHIAGKYEDLIDMYMVTRSEGFGKEVKRRIMLGTYALSSGYYDAYYKKALKVRTLIKNDFEKAFEKCDVIIGPTSPTVAFKIGERANDPLAMYLADIYTVSVNIAGLPGISIPCGLSDGLPVGLQIIGRHFDEGKILNVAYAFEQANKFNAKPQAIGGAR</sequence>
<organism>
    <name type="scientific">Thermoanaerobacter pseudethanolicus (strain ATCC 33223 / 39E)</name>
    <name type="common">Clostridium thermohydrosulfuricum</name>
    <dbReference type="NCBI Taxonomy" id="340099"/>
    <lineage>
        <taxon>Bacteria</taxon>
        <taxon>Bacillati</taxon>
        <taxon>Bacillota</taxon>
        <taxon>Clostridia</taxon>
        <taxon>Thermoanaerobacterales</taxon>
        <taxon>Thermoanaerobacteraceae</taxon>
        <taxon>Thermoanaerobacter</taxon>
    </lineage>
</organism>
<feature type="chain" id="PRO_1000095174" description="Glutamyl-tRNA(Gln) amidotransferase subunit A">
    <location>
        <begin position="1"/>
        <end position="488"/>
    </location>
</feature>
<feature type="active site" description="Charge relay system" evidence="1">
    <location>
        <position position="78"/>
    </location>
</feature>
<feature type="active site" description="Charge relay system" evidence="1">
    <location>
        <position position="153"/>
    </location>
</feature>
<feature type="active site" description="Acyl-ester intermediate" evidence="1">
    <location>
        <position position="177"/>
    </location>
</feature>
<name>GATA_THEP3</name>
<comment type="function">
    <text evidence="1">Allows the formation of correctly charged Gln-tRNA(Gln) through the transamidation of misacylated Glu-tRNA(Gln) in organisms which lack glutaminyl-tRNA synthetase. The reaction takes place in the presence of glutamine and ATP through an activated gamma-phospho-Glu-tRNA(Gln).</text>
</comment>
<comment type="catalytic activity">
    <reaction evidence="1">
        <text>L-glutamyl-tRNA(Gln) + L-glutamine + ATP + H2O = L-glutaminyl-tRNA(Gln) + L-glutamate + ADP + phosphate + H(+)</text>
        <dbReference type="Rhea" id="RHEA:17521"/>
        <dbReference type="Rhea" id="RHEA-COMP:9681"/>
        <dbReference type="Rhea" id="RHEA-COMP:9684"/>
        <dbReference type="ChEBI" id="CHEBI:15377"/>
        <dbReference type="ChEBI" id="CHEBI:15378"/>
        <dbReference type="ChEBI" id="CHEBI:29985"/>
        <dbReference type="ChEBI" id="CHEBI:30616"/>
        <dbReference type="ChEBI" id="CHEBI:43474"/>
        <dbReference type="ChEBI" id="CHEBI:58359"/>
        <dbReference type="ChEBI" id="CHEBI:78520"/>
        <dbReference type="ChEBI" id="CHEBI:78521"/>
        <dbReference type="ChEBI" id="CHEBI:456216"/>
        <dbReference type="EC" id="6.3.5.7"/>
    </reaction>
</comment>
<comment type="subunit">
    <text evidence="1">Heterotrimer of A, B and C subunits.</text>
</comment>
<comment type="similarity">
    <text evidence="1">Belongs to the amidase family. GatA subfamily.</text>
</comment>
<proteinExistence type="inferred from homology"/>
<reference key="1">
    <citation type="submission" date="2008-01" db="EMBL/GenBank/DDBJ databases">
        <title>Complete sequence of Thermoanaerobacter pseudethanolicus 39E.</title>
        <authorList>
            <person name="Copeland A."/>
            <person name="Lucas S."/>
            <person name="Lapidus A."/>
            <person name="Barry K."/>
            <person name="Glavina del Rio T."/>
            <person name="Dalin E."/>
            <person name="Tice H."/>
            <person name="Pitluck S."/>
            <person name="Bruce D."/>
            <person name="Goodwin L."/>
            <person name="Saunders E."/>
            <person name="Brettin T."/>
            <person name="Detter J.C."/>
            <person name="Han C."/>
            <person name="Schmutz J."/>
            <person name="Larimer F."/>
            <person name="Land M."/>
            <person name="Hauser L."/>
            <person name="Kyrpides N."/>
            <person name="Lykidis A."/>
            <person name="Hemme C."/>
            <person name="Fields M.W."/>
            <person name="He Z."/>
            <person name="Zhou J."/>
            <person name="Richardson P."/>
        </authorList>
    </citation>
    <scope>NUCLEOTIDE SEQUENCE [LARGE SCALE GENOMIC DNA]</scope>
    <source>
        <strain>ATCC 33223 / DSM 2355 / 39E</strain>
    </source>
</reference>
<evidence type="ECO:0000255" key="1">
    <source>
        <dbReference type="HAMAP-Rule" id="MF_00120"/>
    </source>
</evidence>
<protein>
    <recommendedName>
        <fullName evidence="1">Glutamyl-tRNA(Gln) amidotransferase subunit A</fullName>
        <shortName evidence="1">Glu-ADT subunit A</shortName>
        <ecNumber evidence="1">6.3.5.7</ecNumber>
    </recommendedName>
</protein>
<dbReference type="EC" id="6.3.5.7" evidence="1"/>
<dbReference type="EMBL" id="CP000924">
    <property type="protein sequence ID" value="ABY95329.1"/>
    <property type="molecule type" value="Genomic_DNA"/>
</dbReference>
<dbReference type="RefSeq" id="WP_012269557.1">
    <property type="nucleotide sequence ID" value="NC_010321.1"/>
</dbReference>
<dbReference type="SMR" id="B0KBN4"/>
<dbReference type="STRING" id="340099.Teth39_1692"/>
<dbReference type="KEGG" id="tpd:Teth39_1692"/>
<dbReference type="eggNOG" id="COG0154">
    <property type="taxonomic scope" value="Bacteria"/>
</dbReference>
<dbReference type="HOGENOM" id="CLU_009600_0_3_9"/>
<dbReference type="Proteomes" id="UP000002156">
    <property type="component" value="Chromosome"/>
</dbReference>
<dbReference type="GO" id="GO:0030956">
    <property type="term" value="C:glutamyl-tRNA(Gln) amidotransferase complex"/>
    <property type="evidence" value="ECO:0007669"/>
    <property type="project" value="InterPro"/>
</dbReference>
<dbReference type="GO" id="GO:0005524">
    <property type="term" value="F:ATP binding"/>
    <property type="evidence" value="ECO:0007669"/>
    <property type="project" value="UniProtKB-KW"/>
</dbReference>
<dbReference type="GO" id="GO:0050567">
    <property type="term" value="F:glutaminyl-tRNA synthase (glutamine-hydrolyzing) activity"/>
    <property type="evidence" value="ECO:0007669"/>
    <property type="project" value="UniProtKB-UniRule"/>
</dbReference>
<dbReference type="GO" id="GO:0006412">
    <property type="term" value="P:translation"/>
    <property type="evidence" value="ECO:0007669"/>
    <property type="project" value="UniProtKB-UniRule"/>
</dbReference>
<dbReference type="Gene3D" id="3.90.1300.10">
    <property type="entry name" value="Amidase signature (AS) domain"/>
    <property type="match status" value="1"/>
</dbReference>
<dbReference type="HAMAP" id="MF_00120">
    <property type="entry name" value="GatA"/>
    <property type="match status" value="1"/>
</dbReference>
<dbReference type="InterPro" id="IPR000120">
    <property type="entry name" value="Amidase"/>
</dbReference>
<dbReference type="InterPro" id="IPR020556">
    <property type="entry name" value="Amidase_CS"/>
</dbReference>
<dbReference type="InterPro" id="IPR023631">
    <property type="entry name" value="Amidase_dom"/>
</dbReference>
<dbReference type="InterPro" id="IPR036928">
    <property type="entry name" value="AS_sf"/>
</dbReference>
<dbReference type="InterPro" id="IPR004412">
    <property type="entry name" value="GatA"/>
</dbReference>
<dbReference type="NCBIfam" id="TIGR00132">
    <property type="entry name" value="gatA"/>
    <property type="match status" value="1"/>
</dbReference>
<dbReference type="PANTHER" id="PTHR11895:SF151">
    <property type="entry name" value="GLUTAMYL-TRNA(GLN) AMIDOTRANSFERASE SUBUNIT A"/>
    <property type="match status" value="1"/>
</dbReference>
<dbReference type="PANTHER" id="PTHR11895">
    <property type="entry name" value="TRANSAMIDASE"/>
    <property type="match status" value="1"/>
</dbReference>
<dbReference type="Pfam" id="PF01425">
    <property type="entry name" value="Amidase"/>
    <property type="match status" value="1"/>
</dbReference>
<dbReference type="PIRSF" id="PIRSF001221">
    <property type="entry name" value="Amidase_fungi"/>
    <property type="match status" value="1"/>
</dbReference>
<dbReference type="SUPFAM" id="SSF75304">
    <property type="entry name" value="Amidase signature (AS) enzymes"/>
    <property type="match status" value="1"/>
</dbReference>
<dbReference type="PROSITE" id="PS00571">
    <property type="entry name" value="AMIDASES"/>
    <property type="match status" value="1"/>
</dbReference>
<accession>B0KBN4</accession>
<keyword id="KW-0067">ATP-binding</keyword>
<keyword id="KW-0436">Ligase</keyword>
<keyword id="KW-0547">Nucleotide-binding</keyword>
<keyword id="KW-0648">Protein biosynthesis</keyword>
<keyword id="KW-1185">Reference proteome</keyword>
<gene>
    <name evidence="1" type="primary">gatA</name>
    <name type="ordered locus">Teth39_1692</name>
</gene>